<dbReference type="EC" id="5.1.3.24" evidence="1"/>
<dbReference type="EMBL" id="CP000247">
    <property type="protein sequence ID" value="ABG72579.1"/>
    <property type="molecule type" value="Genomic_DNA"/>
</dbReference>
<dbReference type="RefSeq" id="WP_001298082.1">
    <property type="nucleotide sequence ID" value="NC_008253.1"/>
</dbReference>
<dbReference type="SMR" id="Q0T900"/>
<dbReference type="KEGG" id="ecp:ECP_4643"/>
<dbReference type="HOGENOM" id="CLU_061535_0_0_6"/>
<dbReference type="Proteomes" id="UP000009182">
    <property type="component" value="Chromosome"/>
</dbReference>
<dbReference type="GO" id="GO:0042597">
    <property type="term" value="C:periplasmic space"/>
    <property type="evidence" value="ECO:0007669"/>
    <property type="project" value="UniProtKB-SubCell"/>
</dbReference>
<dbReference type="GO" id="GO:0016857">
    <property type="term" value="F:racemase and epimerase activity, acting on carbohydrates and derivatives"/>
    <property type="evidence" value="ECO:0007669"/>
    <property type="project" value="UniProtKB-UniRule"/>
</dbReference>
<dbReference type="FunFam" id="2.120.10.80:FF:000061">
    <property type="entry name" value="N-acetylneuraminate epimerase"/>
    <property type="match status" value="1"/>
</dbReference>
<dbReference type="FunFam" id="2.120.10.80:FF:000067">
    <property type="entry name" value="N-acetylneuraminate epimerase"/>
    <property type="match status" value="1"/>
</dbReference>
<dbReference type="Gene3D" id="2.120.10.80">
    <property type="entry name" value="Kelch-type beta propeller"/>
    <property type="match status" value="2"/>
</dbReference>
<dbReference type="HAMAP" id="MF_01195">
    <property type="entry name" value="NanM"/>
    <property type="match status" value="1"/>
</dbReference>
<dbReference type="InterPro" id="IPR015915">
    <property type="entry name" value="Kelch-typ_b-propeller"/>
</dbReference>
<dbReference type="InterPro" id="IPR056734">
    <property type="entry name" value="NANM"/>
</dbReference>
<dbReference type="InterPro" id="IPR019936">
    <property type="entry name" value="NanM_proteobact"/>
</dbReference>
<dbReference type="NCBIfam" id="TIGR03547">
    <property type="entry name" value="muta_rot_YjhT"/>
    <property type="match status" value="1"/>
</dbReference>
<dbReference type="NCBIfam" id="NF010730">
    <property type="entry name" value="PRK14131.1"/>
    <property type="match status" value="1"/>
</dbReference>
<dbReference type="PANTHER" id="PTHR45632">
    <property type="entry name" value="LD33804P"/>
    <property type="match status" value="1"/>
</dbReference>
<dbReference type="Pfam" id="PF24996">
    <property type="entry name" value="NANM"/>
    <property type="match status" value="1"/>
</dbReference>
<dbReference type="SUPFAM" id="SSF117281">
    <property type="entry name" value="Kelch motif"/>
    <property type="match status" value="1"/>
</dbReference>
<keyword id="KW-0119">Carbohydrate metabolism</keyword>
<keyword id="KW-0413">Isomerase</keyword>
<keyword id="KW-0880">Kelch repeat</keyword>
<keyword id="KW-0574">Periplasm</keyword>
<keyword id="KW-0677">Repeat</keyword>
<keyword id="KW-0732">Signal</keyword>
<comment type="function">
    <text evidence="1">Converts alpha-N-acetylneuranimic acid (Neu5Ac) to the beta-anomer, accelerating the equilibrium between the alpha- and beta-anomers. Probably facilitates sialidase-negative bacteria to compete successfully for limited amounts of extracellular Neu5Ac, which is likely taken up in the beta-anomer. In addition, the rapid removal of sialic acid from solution might be advantageous to the bacterium to damp down host responses.</text>
</comment>
<comment type="catalytic activity">
    <reaction evidence="1">
        <text>N-acetyl-alpha-neuraminate = N-acetyl-beta-neuraminate</text>
        <dbReference type="Rhea" id="RHEA:25233"/>
        <dbReference type="ChEBI" id="CHEBI:58705"/>
        <dbReference type="ChEBI" id="CHEBI:58770"/>
        <dbReference type="EC" id="5.1.3.24"/>
    </reaction>
</comment>
<comment type="subunit">
    <text evidence="1">Homodimer.</text>
</comment>
<comment type="subcellular location">
    <subcellularLocation>
        <location evidence="1">Periplasm</location>
    </subcellularLocation>
</comment>
<comment type="similarity">
    <text evidence="1">Belongs to the NanM family.</text>
</comment>
<organism>
    <name type="scientific">Escherichia coli O6:K15:H31 (strain 536 / UPEC)</name>
    <dbReference type="NCBI Taxonomy" id="362663"/>
    <lineage>
        <taxon>Bacteria</taxon>
        <taxon>Pseudomonadati</taxon>
        <taxon>Pseudomonadota</taxon>
        <taxon>Gammaproteobacteria</taxon>
        <taxon>Enterobacterales</taxon>
        <taxon>Enterobacteriaceae</taxon>
        <taxon>Escherichia</taxon>
    </lineage>
</organism>
<reference key="1">
    <citation type="journal article" date="2006" name="Mol. Microbiol.">
        <title>Role of pathogenicity island-associated integrases in the genome plasticity of uropathogenic Escherichia coli strain 536.</title>
        <authorList>
            <person name="Hochhut B."/>
            <person name="Wilde C."/>
            <person name="Balling G."/>
            <person name="Middendorf B."/>
            <person name="Dobrindt U."/>
            <person name="Brzuszkiewicz E."/>
            <person name="Gottschalk G."/>
            <person name="Carniel E."/>
            <person name="Hacker J."/>
        </authorList>
    </citation>
    <scope>NUCLEOTIDE SEQUENCE [LARGE SCALE GENOMIC DNA]</scope>
    <source>
        <strain>536 / UPEC</strain>
    </source>
</reference>
<gene>
    <name evidence="1" type="primary">nanM</name>
    <name type="ordered locus">ECP_4643</name>
</gene>
<name>NANM_ECOL5</name>
<sequence>MNKTITALTIIMASFATNASVLPETPVPFKSGTGAIDNDTVYIGLGSAGTAWYKLDTQAKDKKWTALAAFPGGPRDQATSAFIDGNLYVFGGIGKNSEGLTQVFNDVHKYNPKTNSWVKLMSHAPMGMAGHVTFVHNGKAYVTGGVNQNIFNGYFEDLNEAGKDSTTIDKINAHYFDKKAEDYFFNKFLLSFDPSTQQWSYAGESPWYGTAGAAVVNKGDKTWLINGEAKPGLRTDAVFELDFTGNNLKWNKLAPVASPDGVAGGFAGMSNDSLIFAGGAGFKGSRENYQNGKNYAHEGLKKSYSADIHLWHNGKWDKSGELSQGRAYGVSLPWNNSLLIIGGETAGGKAVTDSVLISVKDNKVTVQN</sequence>
<protein>
    <recommendedName>
        <fullName evidence="1">N-acetylneuraminate epimerase</fullName>
        <ecNumber evidence="1">5.1.3.24</ecNumber>
    </recommendedName>
    <alternativeName>
        <fullName evidence="1">N-acetylneuraminate mutarotase</fullName>
        <shortName evidence="1">Neu5Ac mutarotase</shortName>
    </alternativeName>
    <alternativeName>
        <fullName evidence="1">Sialic acid epimerase</fullName>
    </alternativeName>
</protein>
<proteinExistence type="inferred from homology"/>
<feature type="signal peptide" evidence="1">
    <location>
        <begin position="1"/>
        <end position="19"/>
    </location>
</feature>
<feature type="chain" id="PRO_0000333059" description="N-acetylneuraminate epimerase">
    <location>
        <begin position="20"/>
        <end position="368"/>
    </location>
</feature>
<feature type="repeat" description="Kelch 1">
    <location>
        <begin position="40"/>
        <end position="84"/>
    </location>
</feature>
<feature type="repeat" description="Kelch 2">
    <location>
        <begin position="86"/>
        <end position="137"/>
    </location>
</feature>
<feature type="repeat" description="Kelch 3">
    <location>
        <begin position="139"/>
        <end position="173"/>
    </location>
</feature>
<feature type="repeat" description="Kelch 4">
    <location>
        <begin position="174"/>
        <end position="219"/>
    </location>
</feature>
<feature type="repeat" description="Kelch 5">
    <location>
        <begin position="222"/>
        <end position="265"/>
    </location>
</feature>
<feature type="repeat" description="Kelch 6">
    <location>
        <begin position="287"/>
        <end position="336"/>
    </location>
</feature>
<feature type="repeat" description="Kelch 7">
    <location>
        <begin position="338"/>
        <end position="367"/>
    </location>
</feature>
<feature type="active site" description="Proton acceptor" evidence="1">
    <location>
        <position position="228"/>
    </location>
</feature>
<accession>Q0T900</accession>
<evidence type="ECO:0000255" key="1">
    <source>
        <dbReference type="HAMAP-Rule" id="MF_01195"/>
    </source>
</evidence>